<proteinExistence type="evidence at protein level"/>
<organism>
    <name type="scientific">Arabidopsis thaliana</name>
    <name type="common">Mouse-ear cress</name>
    <dbReference type="NCBI Taxonomy" id="3702"/>
    <lineage>
        <taxon>Eukaryota</taxon>
        <taxon>Viridiplantae</taxon>
        <taxon>Streptophyta</taxon>
        <taxon>Embryophyta</taxon>
        <taxon>Tracheophyta</taxon>
        <taxon>Spermatophyta</taxon>
        <taxon>Magnoliopsida</taxon>
        <taxon>eudicotyledons</taxon>
        <taxon>Gunneridae</taxon>
        <taxon>Pentapetalae</taxon>
        <taxon>rosids</taxon>
        <taxon>malvids</taxon>
        <taxon>Brassicales</taxon>
        <taxon>Brassicaceae</taxon>
        <taxon>Camelineae</taxon>
        <taxon>Arabidopsis</taxon>
    </lineage>
</organism>
<name>GRP3S_ARATH</name>
<keyword id="KW-0025">Alternative splicing</keyword>
<keyword id="KW-0272">Extracellular matrix</keyword>
<keyword id="KW-1185">Reference proteome</keyword>
<keyword id="KW-0677">Repeat</keyword>
<keyword id="KW-0964">Secreted</keyword>
<keyword id="KW-0732">Signal</keyword>
<comment type="function">
    <text evidence="1">Regulates the function of the receptor protein kinase WAK1.</text>
</comment>
<comment type="subunit">
    <text evidence="4">Interacts with WAK1 (via the extracellular domain). Component of a 500 kDa complex, composed of GRP3 or GRP3-S, WAK1 and KAPP.</text>
</comment>
<comment type="interaction">
    <interactant intactId="EBI-2319984">
        <id>Q9ZSJ6</id>
    </interactant>
    <interactant intactId="EBI-2320121">
        <id>Q39191</id>
        <label>WAK1</label>
    </interactant>
    <organismsDiffer>false</organismsDiffer>
    <experiments>2</experiments>
</comment>
<comment type="subcellular location">
    <subcellularLocation>
        <location evidence="5">Secreted</location>
        <location evidence="5">Extracellular space</location>
        <location evidence="5">Extracellular matrix</location>
    </subcellularLocation>
</comment>
<comment type="alternative products">
    <event type="alternative splicing"/>
    <isoform>
        <id>Q9ZSJ6-1</id>
        <name>1</name>
        <sequence type="displayed"/>
    </isoform>
    <text>A number of isoforms are produced. According to EST sequences.</text>
</comment>
<comment type="miscellaneous">
    <text>GRP3 and GRP3S bind to WAK1, WAK3 and WAK5, but GRP2, GRP4,GRP6, GRP7 and GRP8 did not bind to any of the WAK isoforms.</text>
</comment>
<comment type="similarity">
    <text evidence="5">Belongs to the GRP family.</text>
</comment>
<gene>
    <name type="primary">GRP3S</name>
    <name type="ordered locus">At2g05380</name>
    <name type="ORF">F16J10.7</name>
</gene>
<reference key="1">
    <citation type="journal article" date="2001" name="J. Biol. Chem.">
        <title>Interaction of the Arabidopsis receptor protein kinase Wak1 with a glycine-rich protein, AtGRP-3.</title>
        <authorList>
            <person name="Park A.R."/>
            <person name="Cho S.K."/>
            <person name="Yun U.J."/>
            <person name="Jin M.Y."/>
            <person name="Lee S.H."/>
            <person name="Sachetto-Martins G."/>
            <person name="Park O.K."/>
        </authorList>
    </citation>
    <scope>NUCLEOTIDE SEQUENCE [MRNA]</scope>
    <scope>INTERACTION WITH WAK1</scope>
</reference>
<reference key="2">
    <citation type="journal article" date="1999" name="Nature">
        <title>Sequence and analysis of chromosome 2 of the plant Arabidopsis thaliana.</title>
        <authorList>
            <person name="Lin X."/>
            <person name="Kaul S."/>
            <person name="Rounsley S.D."/>
            <person name="Shea T.P."/>
            <person name="Benito M.-I."/>
            <person name="Town C.D."/>
            <person name="Fujii C.Y."/>
            <person name="Mason T.M."/>
            <person name="Bowman C.L."/>
            <person name="Barnstead M.E."/>
            <person name="Feldblyum T.V."/>
            <person name="Buell C.R."/>
            <person name="Ketchum K.A."/>
            <person name="Lee J.J."/>
            <person name="Ronning C.M."/>
            <person name="Koo H.L."/>
            <person name="Moffat K.S."/>
            <person name="Cronin L.A."/>
            <person name="Shen M."/>
            <person name="Pai G."/>
            <person name="Van Aken S."/>
            <person name="Umayam L."/>
            <person name="Tallon L.J."/>
            <person name="Gill J.E."/>
            <person name="Adams M.D."/>
            <person name="Carrera A.J."/>
            <person name="Creasy T.H."/>
            <person name="Goodman H.M."/>
            <person name="Somerville C.R."/>
            <person name="Copenhaver G.P."/>
            <person name="Preuss D."/>
            <person name="Nierman W.C."/>
            <person name="White O."/>
            <person name="Eisen J.A."/>
            <person name="Salzberg S.L."/>
            <person name="Fraser C.M."/>
            <person name="Venter J.C."/>
        </authorList>
    </citation>
    <scope>NUCLEOTIDE SEQUENCE [LARGE SCALE GENOMIC DNA]</scope>
    <source>
        <strain>cv. Columbia</strain>
    </source>
</reference>
<reference key="3">
    <citation type="journal article" date="2017" name="Plant J.">
        <title>Araport11: a complete reannotation of the Arabidopsis thaliana reference genome.</title>
        <authorList>
            <person name="Cheng C.Y."/>
            <person name="Krishnakumar V."/>
            <person name="Chan A.P."/>
            <person name="Thibaud-Nissen F."/>
            <person name="Schobel S."/>
            <person name="Town C.D."/>
        </authorList>
    </citation>
    <scope>GENOME REANNOTATION</scope>
    <source>
        <strain>cv. Columbia</strain>
    </source>
</reference>
<reference key="4">
    <citation type="journal article" date="2003" name="Science">
        <title>Empirical analysis of transcriptional activity in the Arabidopsis genome.</title>
        <authorList>
            <person name="Yamada K."/>
            <person name="Lim J."/>
            <person name="Dale J.M."/>
            <person name="Chen H."/>
            <person name="Shinn P."/>
            <person name="Palm C.J."/>
            <person name="Southwick A.M."/>
            <person name="Wu H.C."/>
            <person name="Kim C.J."/>
            <person name="Nguyen M."/>
            <person name="Pham P.K."/>
            <person name="Cheuk R.F."/>
            <person name="Karlin-Newmann G."/>
            <person name="Liu S.X."/>
            <person name="Lam B."/>
            <person name="Sakano H."/>
            <person name="Wu T."/>
            <person name="Yu G."/>
            <person name="Miranda M."/>
            <person name="Quach H.L."/>
            <person name="Tripp M."/>
            <person name="Chang C.H."/>
            <person name="Lee J.M."/>
            <person name="Toriumi M.J."/>
            <person name="Chan M.M."/>
            <person name="Tang C.C."/>
            <person name="Onodera C.S."/>
            <person name="Deng J.M."/>
            <person name="Akiyama K."/>
            <person name="Ansari Y."/>
            <person name="Arakawa T."/>
            <person name="Banh J."/>
            <person name="Banno F."/>
            <person name="Bowser L."/>
            <person name="Brooks S.Y."/>
            <person name="Carninci P."/>
            <person name="Chao Q."/>
            <person name="Choy N."/>
            <person name="Enju A."/>
            <person name="Goldsmith A.D."/>
            <person name="Gurjal M."/>
            <person name="Hansen N.F."/>
            <person name="Hayashizaki Y."/>
            <person name="Johnson-Hopson C."/>
            <person name="Hsuan V.W."/>
            <person name="Iida K."/>
            <person name="Karnes M."/>
            <person name="Khan S."/>
            <person name="Koesema E."/>
            <person name="Ishida J."/>
            <person name="Jiang P.X."/>
            <person name="Jones T."/>
            <person name="Kawai J."/>
            <person name="Kamiya A."/>
            <person name="Meyers C."/>
            <person name="Nakajima M."/>
            <person name="Narusaka M."/>
            <person name="Seki M."/>
            <person name="Sakurai T."/>
            <person name="Satou M."/>
            <person name="Tamse R."/>
            <person name="Vaysberg M."/>
            <person name="Wallender E.K."/>
            <person name="Wong C."/>
            <person name="Yamamura Y."/>
            <person name="Yuan S."/>
            <person name="Shinozaki K."/>
            <person name="Davis R.W."/>
            <person name="Theologis A."/>
            <person name="Ecker J.R."/>
        </authorList>
    </citation>
    <scope>NUCLEOTIDE SEQUENCE [LARGE SCALE MRNA]</scope>
    <source>
        <strain>cv. Columbia</strain>
    </source>
</reference>
<sequence>MASKTLLLLGLFAFLFIVSEMAAAGTVKSESEETVKPEQHGGGFGDNGGGRYQGGGGHGGHGGGGYQGGGGRYQGGGGRQGGGGSYCRHGCCYKGYHGCSRCCSYAGEAVQTQSGH</sequence>
<accession>Q9ZSJ6</accession>
<accession>Q94A93</accession>
<accession>Q9SHT6</accession>
<dbReference type="EMBL" id="AF104330">
    <property type="protein sequence ID" value="AAD11798.1"/>
    <property type="molecule type" value="mRNA"/>
</dbReference>
<dbReference type="EMBL" id="AC007289">
    <property type="protein sequence ID" value="AAD32899.2"/>
    <property type="molecule type" value="Genomic_DNA"/>
</dbReference>
<dbReference type="EMBL" id="CP002685">
    <property type="protein sequence ID" value="AEC05923.1"/>
    <property type="molecule type" value="Genomic_DNA"/>
</dbReference>
<dbReference type="EMBL" id="AY049267">
    <property type="protein sequence ID" value="AAK83609.1"/>
    <property type="molecule type" value="mRNA"/>
</dbReference>
<dbReference type="EMBL" id="BT001135">
    <property type="protein sequence ID" value="AAN64526.1"/>
    <property type="molecule type" value="mRNA"/>
</dbReference>
<dbReference type="PIR" id="G84467">
    <property type="entry name" value="G84467"/>
</dbReference>
<dbReference type="RefSeq" id="NP_565325.1">
    <molecule id="Q9ZSJ6-1"/>
    <property type="nucleotide sequence ID" value="NM_126561.4"/>
</dbReference>
<dbReference type="BioGRID" id="486">
    <property type="interactions" value="1"/>
</dbReference>
<dbReference type="FunCoup" id="Q9ZSJ6">
    <property type="interactions" value="1"/>
</dbReference>
<dbReference type="IntAct" id="Q9ZSJ6">
    <property type="interactions" value="1"/>
</dbReference>
<dbReference type="STRING" id="3702.Q9ZSJ6"/>
<dbReference type="PaxDb" id="3702-AT2G05380.1"/>
<dbReference type="ProteomicsDB" id="230055">
    <molecule id="Q9ZSJ6-1"/>
</dbReference>
<dbReference type="DNASU" id="815086"/>
<dbReference type="EnsemblPlants" id="AT2G05380.1">
    <molecule id="Q9ZSJ6-1"/>
    <property type="protein sequence ID" value="AT2G05380.1"/>
    <property type="gene ID" value="AT2G05380"/>
</dbReference>
<dbReference type="GeneID" id="815086"/>
<dbReference type="Gramene" id="AT2G05380.1">
    <molecule id="Q9ZSJ6-1"/>
    <property type="protein sequence ID" value="AT2G05380.1"/>
    <property type="gene ID" value="AT2G05380"/>
</dbReference>
<dbReference type="KEGG" id="ath:AT2G05380"/>
<dbReference type="Araport" id="AT2G05380"/>
<dbReference type="TAIR" id="AT2G05380">
    <property type="gene designation" value="GRP3S"/>
</dbReference>
<dbReference type="eggNOG" id="ENOG502S5AC">
    <property type="taxonomic scope" value="Eukaryota"/>
</dbReference>
<dbReference type="HOGENOM" id="CLU_105596_2_0_1"/>
<dbReference type="InParanoid" id="Q9ZSJ6"/>
<dbReference type="PhylomeDB" id="Q9ZSJ6"/>
<dbReference type="PRO" id="PR:Q9ZSJ6"/>
<dbReference type="Proteomes" id="UP000006548">
    <property type="component" value="Chromosome 2"/>
</dbReference>
<dbReference type="ExpressionAtlas" id="Q9ZSJ6">
    <property type="expression patterns" value="baseline and differential"/>
</dbReference>
<dbReference type="GO" id="GO:0005576">
    <property type="term" value="C:extracellular region"/>
    <property type="evidence" value="ECO:0007669"/>
    <property type="project" value="UniProtKB-KW"/>
</dbReference>
<dbReference type="GO" id="GO:0005739">
    <property type="term" value="C:mitochondrion"/>
    <property type="evidence" value="ECO:0007005"/>
    <property type="project" value="TAIR"/>
</dbReference>
<dbReference type="InterPro" id="IPR010800">
    <property type="entry name" value="GRP"/>
</dbReference>
<dbReference type="PANTHER" id="PTHR37389:SF32">
    <property type="entry name" value="GLYCINE-RICH PROTEIN"/>
    <property type="match status" value="1"/>
</dbReference>
<dbReference type="PANTHER" id="PTHR37389">
    <property type="entry name" value="NODULIN-24"/>
    <property type="match status" value="1"/>
</dbReference>
<dbReference type="Pfam" id="PF07172">
    <property type="entry name" value="GRP"/>
    <property type="match status" value="1"/>
</dbReference>
<evidence type="ECO:0000250" key="1"/>
<evidence type="ECO:0000255" key="2"/>
<evidence type="ECO:0000256" key="3">
    <source>
        <dbReference type="SAM" id="MobiDB-lite"/>
    </source>
</evidence>
<evidence type="ECO:0000269" key="4">
    <source>
    </source>
</evidence>
<evidence type="ECO:0000305" key="5"/>
<protein>
    <recommendedName>
        <fullName>Glycine-rich protein 3 short isoform</fullName>
    </recommendedName>
</protein>
<feature type="signal peptide" evidence="2">
    <location>
        <begin position="1"/>
        <end position="24"/>
    </location>
</feature>
<feature type="chain" id="PRO_0000389635" description="Glycine-rich protein 3 short isoform">
    <location>
        <begin position="25"/>
        <end position="116"/>
    </location>
</feature>
<feature type="repeat" description="1">
    <location>
        <begin position="54"/>
        <end position="59"/>
    </location>
</feature>
<feature type="repeat" description="2">
    <location>
        <begin position="62"/>
        <end position="67"/>
    </location>
</feature>
<feature type="repeat" description="3">
    <location>
        <begin position="68"/>
        <end position="73"/>
    </location>
</feature>
<feature type="repeat" description="4">
    <location>
        <begin position="75"/>
        <end position="80"/>
    </location>
</feature>
<feature type="repeat" description="5">
    <location>
        <begin position="81"/>
        <end position="86"/>
    </location>
</feature>
<feature type="region of interest" description="Disordered" evidence="3">
    <location>
        <begin position="27"/>
        <end position="83"/>
    </location>
</feature>
<feature type="region of interest" description="5 X 6 AA tandem repeats of G-G-G-G-[HYRS]-[GYQ]">
    <location>
        <begin position="54"/>
        <end position="86"/>
    </location>
</feature>
<feature type="compositionally biased region" description="Basic and acidic residues" evidence="3">
    <location>
        <begin position="29"/>
        <end position="39"/>
    </location>
</feature>
<feature type="compositionally biased region" description="Gly residues" evidence="3">
    <location>
        <begin position="40"/>
        <end position="83"/>
    </location>
</feature>
<feature type="sequence conflict" description="In Ref. 1; AAD11798." evidence="5" ref="1">
    <original>T</original>
    <variation>A</variation>
    <location>
        <position position="5"/>
    </location>
</feature>
<feature type="sequence conflict" description="In Ref. 1; AAD11798." evidence="5" ref="1">
    <original>S</original>
    <variation>P</variation>
    <location>
        <position position="114"/>
    </location>
</feature>